<keyword id="KW-0238">DNA-binding</keyword>
<keyword id="KW-1185">Reference proteome</keyword>
<keyword id="KW-0677">Repeat</keyword>
<keyword id="KW-0804">Transcription</keyword>
<keyword id="KW-0805">Transcription regulation</keyword>
<gene>
    <name type="primary">tbp</name>
    <name type="ordered locus">APE_1862.1</name>
</gene>
<protein>
    <recommendedName>
        <fullName>TATA-box-binding protein</fullName>
    </recommendedName>
    <alternativeName>
        <fullName>Box A-binding protein</fullName>
        <shortName>BAP</shortName>
    </alternativeName>
    <alternativeName>
        <fullName>TATA sequence-binding protein</fullName>
        <shortName>TBP</shortName>
    </alternativeName>
    <alternativeName>
        <fullName>TATA-box factor</fullName>
    </alternativeName>
</protein>
<organism>
    <name type="scientific">Aeropyrum pernix (strain ATCC 700893 / DSM 11879 / JCM 9820 / NBRC 100138 / K1)</name>
    <dbReference type="NCBI Taxonomy" id="272557"/>
    <lineage>
        <taxon>Archaea</taxon>
        <taxon>Thermoproteota</taxon>
        <taxon>Thermoprotei</taxon>
        <taxon>Desulfurococcales</taxon>
        <taxon>Desulfurococcaceae</taxon>
        <taxon>Aeropyrum</taxon>
    </lineage>
</organism>
<accession>Q9YAT1</accession>
<name>TBP_AERPE</name>
<feature type="chain" id="PRO_0000153997" description="TATA-box-binding protein">
    <location>
        <begin position="1"/>
        <end position="203"/>
    </location>
</feature>
<feature type="repeat" description="1">
    <location>
        <begin position="25"/>
        <end position="101"/>
    </location>
</feature>
<feature type="repeat" description="2">
    <location>
        <begin position="116"/>
        <end position="192"/>
    </location>
</feature>
<proteinExistence type="inferred from homology"/>
<dbReference type="EMBL" id="BA000002">
    <property type="protein sequence ID" value="BAA80867.2"/>
    <property type="molecule type" value="Genomic_DNA"/>
</dbReference>
<dbReference type="PIR" id="F72572">
    <property type="entry name" value="F72572"/>
</dbReference>
<dbReference type="SMR" id="Q9YAT1"/>
<dbReference type="STRING" id="272557.APE_1862.1"/>
<dbReference type="EnsemblBacteria" id="BAA80867">
    <property type="protein sequence ID" value="BAA80867"/>
    <property type="gene ID" value="APE_1862.1"/>
</dbReference>
<dbReference type="KEGG" id="ape:APE_1862.1"/>
<dbReference type="PATRIC" id="fig|272557.25.peg.1248"/>
<dbReference type="eggNOG" id="arCOG01764">
    <property type="taxonomic scope" value="Archaea"/>
</dbReference>
<dbReference type="Proteomes" id="UP000002518">
    <property type="component" value="Chromosome"/>
</dbReference>
<dbReference type="GO" id="GO:0003677">
    <property type="term" value="F:DNA binding"/>
    <property type="evidence" value="ECO:0007669"/>
    <property type="project" value="UniProtKB-KW"/>
</dbReference>
<dbReference type="GO" id="GO:0003700">
    <property type="term" value="F:DNA-binding transcription factor activity"/>
    <property type="evidence" value="ECO:0007669"/>
    <property type="project" value="UniProtKB-UniRule"/>
</dbReference>
<dbReference type="GO" id="GO:0006352">
    <property type="term" value="P:DNA-templated transcription initiation"/>
    <property type="evidence" value="ECO:0007669"/>
    <property type="project" value="InterPro"/>
</dbReference>
<dbReference type="CDD" id="cd04518">
    <property type="entry name" value="TBP_archaea"/>
    <property type="match status" value="1"/>
</dbReference>
<dbReference type="FunFam" id="3.30.310.10:FF:000007">
    <property type="entry name" value="TATA-box-binding protein"/>
    <property type="match status" value="1"/>
</dbReference>
<dbReference type="Gene3D" id="3.30.310.10">
    <property type="entry name" value="TATA-Binding Protein"/>
    <property type="match status" value="2"/>
</dbReference>
<dbReference type="HAMAP" id="MF_00408">
    <property type="entry name" value="TATA_bind_prot_arch"/>
    <property type="match status" value="1"/>
</dbReference>
<dbReference type="InterPro" id="IPR000814">
    <property type="entry name" value="TBP"/>
</dbReference>
<dbReference type="InterPro" id="IPR033711">
    <property type="entry name" value="TBP_archaea"/>
</dbReference>
<dbReference type="InterPro" id="IPR030491">
    <property type="entry name" value="TBP_CS"/>
</dbReference>
<dbReference type="InterPro" id="IPR012295">
    <property type="entry name" value="TBP_dom_sf"/>
</dbReference>
<dbReference type="NCBIfam" id="NF001592">
    <property type="entry name" value="PRK00394.1-1"/>
    <property type="match status" value="1"/>
</dbReference>
<dbReference type="NCBIfam" id="NF001593">
    <property type="entry name" value="PRK00394.1-2"/>
    <property type="match status" value="1"/>
</dbReference>
<dbReference type="PANTHER" id="PTHR10126">
    <property type="entry name" value="TATA-BOX BINDING PROTEIN"/>
    <property type="match status" value="1"/>
</dbReference>
<dbReference type="Pfam" id="PF00352">
    <property type="entry name" value="TBP"/>
    <property type="match status" value="2"/>
</dbReference>
<dbReference type="PRINTS" id="PR00686">
    <property type="entry name" value="TIFACTORIID"/>
</dbReference>
<dbReference type="SUPFAM" id="SSF55945">
    <property type="entry name" value="TATA-box binding protein-like"/>
    <property type="match status" value="2"/>
</dbReference>
<dbReference type="PROSITE" id="PS00351">
    <property type="entry name" value="TFIID"/>
    <property type="match status" value="1"/>
</dbReference>
<comment type="function">
    <text evidence="1">General factor that plays a role in the activation of archaeal genes transcribed by RNA polymerase. Binds specifically to the TATA box promoter element which lies close to the position of transcription initiation (By similarity).</text>
</comment>
<comment type="similarity">
    <text evidence="2">Belongs to the TBP family.</text>
</comment>
<sequence length="203" mass="22645">MSEEISFVKEIDTGVEGLPKPEVKIENIVATVILENQLDLNLIETKIQDVDYNPDQFPGLVYRLESPRVTVLIFKSGKMVITGAKSINQLIHVVKKLLKAFADQGIPISGKPQIQIQNIVASANLKVYIDLEKAALEFENSLYEPEQFPGLIYRMDEPRVVMLIFSSGKMVITGAKMENEVYDAVKKVARKLKEADAIIGIAE</sequence>
<evidence type="ECO:0000250" key="1"/>
<evidence type="ECO:0000305" key="2"/>
<reference key="1">
    <citation type="journal article" date="1999" name="DNA Res.">
        <title>Complete genome sequence of an aerobic hyper-thermophilic crenarchaeon, Aeropyrum pernix K1.</title>
        <authorList>
            <person name="Kawarabayasi Y."/>
            <person name="Hino Y."/>
            <person name="Horikawa H."/>
            <person name="Yamazaki S."/>
            <person name="Haikawa Y."/>
            <person name="Jin-no K."/>
            <person name="Takahashi M."/>
            <person name="Sekine M."/>
            <person name="Baba S."/>
            <person name="Ankai A."/>
            <person name="Kosugi H."/>
            <person name="Hosoyama A."/>
            <person name="Fukui S."/>
            <person name="Nagai Y."/>
            <person name="Nishijima K."/>
            <person name="Nakazawa H."/>
            <person name="Takamiya M."/>
            <person name="Masuda S."/>
            <person name="Funahashi T."/>
            <person name="Tanaka T."/>
            <person name="Kudoh Y."/>
            <person name="Yamazaki J."/>
            <person name="Kushida N."/>
            <person name="Oguchi A."/>
            <person name="Aoki K."/>
            <person name="Kubota K."/>
            <person name="Nakamura Y."/>
            <person name="Nomura N."/>
            <person name="Sako Y."/>
            <person name="Kikuchi H."/>
        </authorList>
    </citation>
    <scope>NUCLEOTIDE SEQUENCE [LARGE SCALE GENOMIC DNA]</scope>
    <source>
        <strain>ATCC 700893 / DSM 11879 / JCM 9820 / NBRC 100138 / K1</strain>
    </source>
</reference>